<protein>
    <recommendedName>
        <fullName evidence="1">Ribosome maturation factor RimP</fullName>
    </recommendedName>
</protein>
<keyword id="KW-0963">Cytoplasm</keyword>
<keyword id="KW-0690">Ribosome biogenesis</keyword>
<gene>
    <name evidence="1" type="primary">rimP</name>
    <name type="ordered locus">FTM_0112</name>
</gene>
<organism>
    <name type="scientific">Francisella tularensis subsp. mediasiatica (strain FSC147)</name>
    <dbReference type="NCBI Taxonomy" id="441952"/>
    <lineage>
        <taxon>Bacteria</taxon>
        <taxon>Pseudomonadati</taxon>
        <taxon>Pseudomonadota</taxon>
        <taxon>Gammaproteobacteria</taxon>
        <taxon>Thiotrichales</taxon>
        <taxon>Francisellaceae</taxon>
        <taxon>Francisella</taxon>
    </lineage>
</organism>
<feature type="chain" id="PRO_1000136764" description="Ribosome maturation factor RimP">
    <location>
        <begin position="1"/>
        <end position="150"/>
    </location>
</feature>
<accession>B2SEW5</accession>
<evidence type="ECO:0000255" key="1">
    <source>
        <dbReference type="HAMAP-Rule" id="MF_01077"/>
    </source>
</evidence>
<comment type="function">
    <text evidence="1">Required for maturation of 30S ribosomal subunits.</text>
</comment>
<comment type="subcellular location">
    <subcellularLocation>
        <location evidence="1">Cytoplasm</location>
    </subcellularLocation>
</comment>
<comment type="similarity">
    <text evidence="1">Belongs to the RimP family.</text>
</comment>
<name>RIMP_FRATM</name>
<reference key="1">
    <citation type="journal article" date="2009" name="PLoS Pathog.">
        <title>Molecular evolutionary consequences of niche restriction in Francisella tularensis, a facultative intracellular pathogen.</title>
        <authorList>
            <person name="Larsson P."/>
            <person name="Elfsmark D."/>
            <person name="Svensson K."/>
            <person name="Wikstroem P."/>
            <person name="Forsman M."/>
            <person name="Brettin T."/>
            <person name="Keim P."/>
            <person name="Johansson A."/>
        </authorList>
    </citation>
    <scope>NUCLEOTIDE SEQUENCE [LARGE SCALE GENOMIC DNA]</scope>
    <source>
        <strain>FSC147</strain>
    </source>
</reference>
<sequence>MLLDDLYEIVEPITADLGYILWGIEVVGSGKLTIRIFIDHENGVSVDDCQIVSKEISAVFDVEDPVSGKYILEVSSPGMNRQIFNIIQAQALVGFNVKAVTLAPVGSQTKFKGVLERVEGNSVILNLEDGKEISFDFDELKKLRVSPDFS</sequence>
<proteinExistence type="inferred from homology"/>
<dbReference type="EMBL" id="CP000915">
    <property type="protein sequence ID" value="ACD30210.1"/>
    <property type="molecule type" value="Genomic_DNA"/>
</dbReference>
<dbReference type="SMR" id="B2SEW5"/>
<dbReference type="KEGG" id="ftm:FTM_0112"/>
<dbReference type="HOGENOM" id="CLU_070525_1_1_6"/>
<dbReference type="GO" id="GO:0005829">
    <property type="term" value="C:cytosol"/>
    <property type="evidence" value="ECO:0007669"/>
    <property type="project" value="TreeGrafter"/>
</dbReference>
<dbReference type="GO" id="GO:0000028">
    <property type="term" value="P:ribosomal small subunit assembly"/>
    <property type="evidence" value="ECO:0007669"/>
    <property type="project" value="TreeGrafter"/>
</dbReference>
<dbReference type="GO" id="GO:0006412">
    <property type="term" value="P:translation"/>
    <property type="evidence" value="ECO:0007669"/>
    <property type="project" value="TreeGrafter"/>
</dbReference>
<dbReference type="CDD" id="cd01734">
    <property type="entry name" value="YlxS_C"/>
    <property type="match status" value="1"/>
</dbReference>
<dbReference type="FunFam" id="3.30.300.70:FF:000001">
    <property type="entry name" value="Ribosome maturation factor RimP"/>
    <property type="match status" value="1"/>
</dbReference>
<dbReference type="Gene3D" id="2.30.30.180">
    <property type="entry name" value="Ribosome maturation factor RimP, C-terminal domain"/>
    <property type="match status" value="1"/>
</dbReference>
<dbReference type="Gene3D" id="3.30.300.70">
    <property type="entry name" value="RimP-like superfamily, N-terminal"/>
    <property type="match status" value="1"/>
</dbReference>
<dbReference type="HAMAP" id="MF_01077">
    <property type="entry name" value="RimP"/>
    <property type="match status" value="1"/>
</dbReference>
<dbReference type="InterPro" id="IPR003728">
    <property type="entry name" value="Ribosome_maturation_RimP"/>
</dbReference>
<dbReference type="InterPro" id="IPR028998">
    <property type="entry name" value="RimP_C"/>
</dbReference>
<dbReference type="InterPro" id="IPR036847">
    <property type="entry name" value="RimP_C_sf"/>
</dbReference>
<dbReference type="InterPro" id="IPR028989">
    <property type="entry name" value="RimP_N"/>
</dbReference>
<dbReference type="InterPro" id="IPR035956">
    <property type="entry name" value="RimP_N_sf"/>
</dbReference>
<dbReference type="NCBIfam" id="NF011226">
    <property type="entry name" value="PRK14633.1"/>
    <property type="match status" value="1"/>
</dbReference>
<dbReference type="PANTHER" id="PTHR33867">
    <property type="entry name" value="RIBOSOME MATURATION FACTOR RIMP"/>
    <property type="match status" value="1"/>
</dbReference>
<dbReference type="PANTHER" id="PTHR33867:SF1">
    <property type="entry name" value="RIBOSOME MATURATION FACTOR RIMP"/>
    <property type="match status" value="1"/>
</dbReference>
<dbReference type="Pfam" id="PF17384">
    <property type="entry name" value="DUF150_C"/>
    <property type="match status" value="1"/>
</dbReference>
<dbReference type="Pfam" id="PF02576">
    <property type="entry name" value="RimP_N"/>
    <property type="match status" value="1"/>
</dbReference>
<dbReference type="SUPFAM" id="SSF74942">
    <property type="entry name" value="YhbC-like, C-terminal domain"/>
    <property type="match status" value="1"/>
</dbReference>
<dbReference type="SUPFAM" id="SSF75420">
    <property type="entry name" value="YhbC-like, N-terminal domain"/>
    <property type="match status" value="1"/>
</dbReference>